<gene>
    <name type="primary">COX8A</name>
    <name type="synonym">COX8</name>
    <name type="synonym">COX8L</name>
</gene>
<evidence type="ECO:0000250" key="1">
    <source>
        <dbReference type="UniProtKB" id="P10175"/>
    </source>
</evidence>
<evidence type="ECO:0000250" key="2">
    <source>
        <dbReference type="UniProtKB" id="P10176"/>
    </source>
</evidence>
<evidence type="ECO:0000305" key="3"/>
<organism>
    <name type="scientific">Otolemur crassicaudatus</name>
    <name type="common">Brown greater galago</name>
    <name type="synonym">Galago crassicaudatus</name>
    <dbReference type="NCBI Taxonomy" id="9463"/>
    <lineage>
        <taxon>Eukaryota</taxon>
        <taxon>Metazoa</taxon>
        <taxon>Chordata</taxon>
        <taxon>Craniata</taxon>
        <taxon>Vertebrata</taxon>
        <taxon>Euteleostomi</taxon>
        <taxon>Mammalia</taxon>
        <taxon>Eutheria</taxon>
        <taxon>Euarchontoglires</taxon>
        <taxon>Primates</taxon>
        <taxon>Strepsirrhini</taxon>
        <taxon>Lorisiformes</taxon>
        <taxon>Galagidae</taxon>
        <taxon>Otolemur</taxon>
    </lineage>
</organism>
<feature type="transit peptide" description="Mitochondrion" evidence="2">
    <location>
        <begin position="1"/>
        <end position="25"/>
    </location>
</feature>
<feature type="chain" id="PRO_0000006184" description="Cytochrome c oxidase subunit 8A, mitochondrial">
    <location>
        <begin position="26"/>
        <end position="69"/>
    </location>
</feature>
<feature type="topological domain" description="Mitochondrial matrix" evidence="2">
    <location>
        <begin position="26"/>
        <end position="36"/>
    </location>
</feature>
<feature type="transmembrane region" description="Helical" evidence="1">
    <location>
        <begin position="37"/>
        <end position="60"/>
    </location>
</feature>
<feature type="topological domain" description="Mitochondrial intermembrane" evidence="2">
    <location>
        <begin position="61"/>
        <end position="69"/>
    </location>
</feature>
<feature type="short sequence motif" description="SIFI-degron" evidence="2">
    <location>
        <begin position="2"/>
        <end position="19"/>
    </location>
</feature>
<accession>Q863G3</accession>
<protein>
    <recommendedName>
        <fullName>Cytochrome c oxidase subunit 8A, mitochondrial</fullName>
    </recommendedName>
    <alternativeName>
        <fullName>Cytochrome c oxidase polypeptide VIII-liver</fullName>
    </alternativeName>
    <alternativeName>
        <fullName>Cytochrome c oxidase subunit 8-2</fullName>
    </alternativeName>
</protein>
<keyword id="KW-0472">Membrane</keyword>
<keyword id="KW-0496">Mitochondrion</keyword>
<keyword id="KW-0999">Mitochondrion inner membrane</keyword>
<keyword id="KW-0809">Transit peptide</keyword>
<keyword id="KW-0812">Transmembrane</keyword>
<keyword id="KW-1133">Transmembrane helix</keyword>
<keyword id="KW-0832">Ubl conjugation</keyword>
<name>COX8A_OTOCR</name>
<dbReference type="EMBL" id="AY254823">
    <property type="protein sequence ID" value="AAP32254.1"/>
    <property type="molecule type" value="mRNA"/>
</dbReference>
<dbReference type="SMR" id="Q863G3"/>
<dbReference type="UniPathway" id="UPA00705"/>
<dbReference type="GO" id="GO:0005743">
    <property type="term" value="C:mitochondrial inner membrane"/>
    <property type="evidence" value="ECO:0007669"/>
    <property type="project" value="UniProtKB-SubCell"/>
</dbReference>
<dbReference type="GO" id="GO:0045277">
    <property type="term" value="C:respiratory chain complex IV"/>
    <property type="evidence" value="ECO:0007669"/>
    <property type="project" value="InterPro"/>
</dbReference>
<dbReference type="GO" id="GO:0006123">
    <property type="term" value="P:mitochondrial electron transport, cytochrome c to oxygen"/>
    <property type="evidence" value="ECO:0007669"/>
    <property type="project" value="InterPro"/>
</dbReference>
<dbReference type="CDD" id="cd00930">
    <property type="entry name" value="Cyt_c_Oxidase_VIII"/>
    <property type="match status" value="1"/>
</dbReference>
<dbReference type="FunFam" id="4.10.81.10:FF:000001">
    <property type="entry name" value="Cytochrome c oxidase subunit 8B, mitochondrial"/>
    <property type="match status" value="1"/>
</dbReference>
<dbReference type="Gene3D" id="4.10.81.10">
    <property type="entry name" value="Cytochrome c oxidase, subunit 8"/>
    <property type="match status" value="1"/>
</dbReference>
<dbReference type="InterPro" id="IPR003205">
    <property type="entry name" value="Cyt_c_oxidase_su8"/>
</dbReference>
<dbReference type="InterPro" id="IPR036548">
    <property type="entry name" value="Cyt_c_oxidase_su8_sf"/>
</dbReference>
<dbReference type="PANTHER" id="PTHR16717">
    <property type="entry name" value="CYTOCHROME C OXIDASE POLYPEPTIDE VIII"/>
    <property type="match status" value="1"/>
</dbReference>
<dbReference type="PANTHER" id="PTHR16717:SF1">
    <property type="entry name" value="CYTOCHROME C OXIDASE SUBUNIT 8A, MITOCHONDRIAL"/>
    <property type="match status" value="1"/>
</dbReference>
<dbReference type="Pfam" id="PF02285">
    <property type="entry name" value="COX8"/>
    <property type="match status" value="1"/>
</dbReference>
<dbReference type="SUPFAM" id="SSF81431">
    <property type="entry name" value="Mitochondrial cytochrome c oxidase subunit VIIIb (aka IX)"/>
    <property type="match status" value="1"/>
</dbReference>
<sequence length="69" mass="7662">MSVLTPLLLRGLTGSARRLPVPCARVHSKPPREQLGTMDIAIGLTSCFVCFLLPSGWVLSHLENYKKRE</sequence>
<comment type="function">
    <text evidence="1">Component of the cytochrome c oxidase, the last enzyme in the mitochondrial electron transport chain which drives oxidative phosphorylation. The respiratory chain contains 3 multisubunit complexes succinate dehydrogenase (complex II, CII), ubiquinol-cytochrome c oxidoreductase (cytochrome b-c1 complex, complex III, CIII) and cytochrome c oxidase (complex IV, CIV), that cooperate to transfer electrons derived from NADH and succinate to molecular oxygen, creating an electrochemical gradient over the inner membrane that drives transmembrane transport and the ATP synthase. Cytochrome c oxidase is the component of the respiratory chain that catalyzes the reduction of oxygen to water. Electrons originating from reduced cytochrome c in the intermembrane space (IMS) are transferred via the dinuclear copper A center (CU(A)) of subunit 2 and heme A of subunit 1 to the active site in subunit 1, a binuclear center (BNC) formed by heme A3 and copper B (CU(B)). The BNC reduces molecular oxygen to 2 water molecules using 4 electrons from cytochrome c in the IMS and 4 protons from the mitochondrial matrix.</text>
</comment>
<comment type="pathway">
    <text evidence="1">Energy metabolism; oxidative phosphorylation.</text>
</comment>
<comment type="subunit">
    <text evidence="2">Component of the cytochrome c oxidase (complex IV, CIV), a multisubunit enzyme composed of 14 subunits. The complex is composed of a catalytic core of 3 subunits MT-CO1, MT-CO2 and MT-CO3, encoded in the mitochondrial DNA, and 11 supernumerary subunits COX4I, COX5A, COX5B, COX6A, COX6B, COX6C, COX7A, COX7B, COX7C, COX8 and NDUFA4, which are encoded in the nuclear genome. The complex exists as a monomer or a dimer and forms supercomplexes (SCs) in the inner mitochondrial membrane with NADH-ubiquinone oxidoreductase (complex I, CI) and ubiquinol-cytochrome c oxidoreductase (cytochrome b-c1 complex, complex III, CIII), resulting in different assemblies (supercomplex SCI(1)III(2)IV(1) and megacomplex MCI(2)III(2)IV(2)).</text>
</comment>
<comment type="subcellular location">
    <subcellularLocation>
        <location evidence="2">Mitochondrion inner membrane</location>
        <topology evidence="2">Single-pass membrane protein</topology>
    </subcellularLocation>
</comment>
<comment type="PTM">
    <text evidence="2">In response to mitochondrial stress, the precursor protein is ubiquitinated by the SIFI complex in the cytoplasm before mitochondrial import, leading to its degradation. Within the SIFI complex, UBR4 initiates ubiquitin chain that are further elongated or branched by KCMF1.</text>
</comment>
<comment type="similarity">
    <text evidence="3">Belongs to the cytochrome c oxidase VIII family.</text>
</comment>
<proteinExistence type="inferred from homology"/>
<reference key="1">
    <citation type="journal article" date="2003" name="Proc. Natl. Acad. Sci. U.S.A.">
        <title>Adaptive evolution of cytochrome c oxidase subunit VIII in anthropoid primates.</title>
        <authorList>
            <person name="Goldberg A."/>
            <person name="Wildman D.E."/>
            <person name="Schmidt T.R."/>
            <person name="Huttemann M."/>
            <person name="Goodman M."/>
            <person name="Weiss M.L."/>
            <person name="Grossman L.I."/>
        </authorList>
    </citation>
    <scope>NUCLEOTIDE SEQUENCE [MRNA]</scope>
</reference>